<dbReference type="EMBL" id="CU329670">
    <property type="protein sequence ID" value="CAB11510.1"/>
    <property type="molecule type" value="Genomic_DNA"/>
</dbReference>
<dbReference type="PIR" id="T37825">
    <property type="entry name" value="T37825"/>
</dbReference>
<dbReference type="BioGRID" id="278715">
    <property type="interactions" value="10"/>
</dbReference>
<dbReference type="FunCoup" id="O13772">
    <property type="interactions" value="418"/>
</dbReference>
<dbReference type="IntAct" id="O13772">
    <property type="interactions" value="3"/>
</dbReference>
<dbReference type="STRING" id="284812.O13772"/>
<dbReference type="PaxDb" id="4896-SPAC17A5.10.1"/>
<dbReference type="EnsemblFungi" id="SPAC17A5.10.1">
    <property type="protein sequence ID" value="SPAC17A5.10.1:pep"/>
    <property type="gene ID" value="SPAC17A5.10"/>
</dbReference>
<dbReference type="KEGG" id="spo:2542245"/>
<dbReference type="PomBase" id="SPAC17A5.10"/>
<dbReference type="VEuPathDB" id="FungiDB:SPAC17A5.10"/>
<dbReference type="eggNOG" id="ENOG502S12N">
    <property type="taxonomic scope" value="Eukaryota"/>
</dbReference>
<dbReference type="HOGENOM" id="CLU_1235676_0_0_1"/>
<dbReference type="InParanoid" id="O13772"/>
<dbReference type="OMA" id="GMVHFLF"/>
<dbReference type="PRO" id="PR:O13772"/>
<dbReference type="Proteomes" id="UP000002485">
    <property type="component" value="Chromosome I"/>
</dbReference>
<dbReference type="GO" id="GO:0005737">
    <property type="term" value="C:cytoplasm"/>
    <property type="evidence" value="ECO:0007005"/>
    <property type="project" value="PomBase"/>
</dbReference>
<dbReference type="InterPro" id="IPR038910">
    <property type="entry name" value="Hua1-like"/>
</dbReference>
<dbReference type="PANTHER" id="PTHR28031">
    <property type="entry name" value="PROLINE-RICH PROTEIN HUA1"/>
    <property type="match status" value="1"/>
</dbReference>
<dbReference type="PANTHER" id="PTHR28031:SF1">
    <property type="entry name" value="PROLINE-RICH PROTEIN HUA1"/>
    <property type="match status" value="1"/>
</dbReference>
<name>HUA1_SCHPO</name>
<evidence type="ECO:0000250" key="1"/>
<evidence type="ECO:0000256" key="2">
    <source>
        <dbReference type="SAM" id="MobiDB-lite"/>
    </source>
</evidence>
<evidence type="ECO:0000269" key="3">
    <source>
    </source>
</evidence>
<evidence type="ECO:0000269" key="4">
    <source>
    </source>
</evidence>
<evidence type="ECO:0000305" key="5"/>
<keyword id="KW-0963">Cytoplasm</keyword>
<keyword id="KW-1185">Reference proteome</keyword>
<feature type="chain" id="PRO_0000116709" description="Proline/serine-rich protein C17A5.10">
    <location>
        <begin position="1"/>
        <end position="224"/>
    </location>
</feature>
<feature type="region of interest" description="Disordered" evidence="2">
    <location>
        <begin position="1"/>
        <end position="110"/>
    </location>
</feature>
<feature type="compositionally biased region" description="Pro residues" evidence="2">
    <location>
        <begin position="1"/>
        <end position="10"/>
    </location>
</feature>
<feature type="compositionally biased region" description="Low complexity" evidence="2">
    <location>
        <begin position="31"/>
        <end position="52"/>
    </location>
</feature>
<feature type="compositionally biased region" description="Polar residues" evidence="2">
    <location>
        <begin position="53"/>
        <end position="68"/>
    </location>
</feature>
<feature type="compositionally biased region" description="Polar residues" evidence="2">
    <location>
        <begin position="77"/>
        <end position="94"/>
    </location>
</feature>
<feature type="compositionally biased region" description="Polar residues" evidence="2">
    <location>
        <begin position="101"/>
        <end position="110"/>
    </location>
</feature>
<comment type="function">
    <text evidence="1">May be involved in assembly and disassembly of the actin cytoskeleton.</text>
</comment>
<comment type="subcellular location">
    <subcellularLocation>
        <location evidence="4">Cytoplasm</location>
    </subcellularLocation>
</comment>
<comment type="induction">
    <text evidence="3">By stress.</text>
</comment>
<comment type="similarity">
    <text evidence="5">Belongs to the HUA1 family.</text>
</comment>
<accession>O13772</accession>
<organism>
    <name type="scientific">Schizosaccharomyces pombe (strain 972 / ATCC 24843)</name>
    <name type="common">Fission yeast</name>
    <dbReference type="NCBI Taxonomy" id="284812"/>
    <lineage>
        <taxon>Eukaryota</taxon>
        <taxon>Fungi</taxon>
        <taxon>Dikarya</taxon>
        <taxon>Ascomycota</taxon>
        <taxon>Taphrinomycotina</taxon>
        <taxon>Schizosaccharomycetes</taxon>
        <taxon>Schizosaccharomycetales</taxon>
        <taxon>Schizosaccharomycetaceae</taxon>
        <taxon>Schizosaccharomyces</taxon>
    </lineage>
</organism>
<proteinExistence type="evidence at transcript level"/>
<sequence>MTDDSVPPPSYEEVLRQEGVIDSPNSSNGQTSTSAGHPSSSSSTLPNYAASSLNSRPVSSSGSGNAYSQAPYPPARPTSQRPNSWQPGNASTMYASPPPSSNYNTAKPPYQTSQFYARPQSSYAPPPSGRPRISYPYPPGYMCYKCHNTGYKDSGRPCGRCARRFGRSYDVQFSRPPPGALVVYPGDPRIPGRVCGNCKGSGQLDFIFFTEICPVCNGVGKIPY</sequence>
<reference key="1">
    <citation type="journal article" date="2002" name="Nature">
        <title>The genome sequence of Schizosaccharomyces pombe.</title>
        <authorList>
            <person name="Wood V."/>
            <person name="Gwilliam R."/>
            <person name="Rajandream M.A."/>
            <person name="Lyne M.H."/>
            <person name="Lyne R."/>
            <person name="Stewart A."/>
            <person name="Sgouros J.G."/>
            <person name="Peat N."/>
            <person name="Hayles J."/>
            <person name="Baker S.G."/>
            <person name="Basham D."/>
            <person name="Bowman S."/>
            <person name="Brooks K."/>
            <person name="Brown D."/>
            <person name="Brown S."/>
            <person name="Chillingworth T."/>
            <person name="Churcher C.M."/>
            <person name="Collins M."/>
            <person name="Connor R."/>
            <person name="Cronin A."/>
            <person name="Davis P."/>
            <person name="Feltwell T."/>
            <person name="Fraser A."/>
            <person name="Gentles S."/>
            <person name="Goble A."/>
            <person name="Hamlin N."/>
            <person name="Harris D.E."/>
            <person name="Hidalgo J."/>
            <person name="Hodgson G."/>
            <person name="Holroyd S."/>
            <person name="Hornsby T."/>
            <person name="Howarth S."/>
            <person name="Huckle E.J."/>
            <person name="Hunt S."/>
            <person name="Jagels K."/>
            <person name="James K.D."/>
            <person name="Jones L."/>
            <person name="Jones M."/>
            <person name="Leather S."/>
            <person name="McDonald S."/>
            <person name="McLean J."/>
            <person name="Mooney P."/>
            <person name="Moule S."/>
            <person name="Mungall K.L."/>
            <person name="Murphy L.D."/>
            <person name="Niblett D."/>
            <person name="Odell C."/>
            <person name="Oliver K."/>
            <person name="O'Neil S."/>
            <person name="Pearson D."/>
            <person name="Quail M.A."/>
            <person name="Rabbinowitsch E."/>
            <person name="Rutherford K.M."/>
            <person name="Rutter S."/>
            <person name="Saunders D."/>
            <person name="Seeger K."/>
            <person name="Sharp S."/>
            <person name="Skelton J."/>
            <person name="Simmonds M.N."/>
            <person name="Squares R."/>
            <person name="Squares S."/>
            <person name="Stevens K."/>
            <person name="Taylor K."/>
            <person name="Taylor R.G."/>
            <person name="Tivey A."/>
            <person name="Walsh S.V."/>
            <person name="Warren T."/>
            <person name="Whitehead S."/>
            <person name="Woodward J.R."/>
            <person name="Volckaert G."/>
            <person name="Aert R."/>
            <person name="Robben J."/>
            <person name="Grymonprez B."/>
            <person name="Weltjens I."/>
            <person name="Vanstreels E."/>
            <person name="Rieger M."/>
            <person name="Schaefer M."/>
            <person name="Mueller-Auer S."/>
            <person name="Gabel C."/>
            <person name="Fuchs M."/>
            <person name="Duesterhoeft A."/>
            <person name="Fritzc C."/>
            <person name="Holzer E."/>
            <person name="Moestl D."/>
            <person name="Hilbert H."/>
            <person name="Borzym K."/>
            <person name="Langer I."/>
            <person name="Beck A."/>
            <person name="Lehrach H."/>
            <person name="Reinhardt R."/>
            <person name="Pohl T.M."/>
            <person name="Eger P."/>
            <person name="Zimmermann W."/>
            <person name="Wedler H."/>
            <person name="Wambutt R."/>
            <person name="Purnelle B."/>
            <person name="Goffeau A."/>
            <person name="Cadieu E."/>
            <person name="Dreano S."/>
            <person name="Gloux S."/>
            <person name="Lelaure V."/>
            <person name="Mottier S."/>
            <person name="Galibert F."/>
            <person name="Aves S.J."/>
            <person name="Xiang Z."/>
            <person name="Hunt C."/>
            <person name="Moore K."/>
            <person name="Hurst S.M."/>
            <person name="Lucas M."/>
            <person name="Rochet M."/>
            <person name="Gaillardin C."/>
            <person name="Tallada V.A."/>
            <person name="Garzon A."/>
            <person name="Thode G."/>
            <person name="Daga R.R."/>
            <person name="Cruzado L."/>
            <person name="Jimenez J."/>
            <person name="Sanchez M."/>
            <person name="del Rey F."/>
            <person name="Benito J."/>
            <person name="Dominguez A."/>
            <person name="Revuelta J.L."/>
            <person name="Moreno S."/>
            <person name="Armstrong J."/>
            <person name="Forsburg S.L."/>
            <person name="Cerutti L."/>
            <person name="Lowe T."/>
            <person name="McCombie W.R."/>
            <person name="Paulsen I."/>
            <person name="Potashkin J."/>
            <person name="Shpakovski G.V."/>
            <person name="Ussery D."/>
            <person name="Barrell B.G."/>
            <person name="Nurse P."/>
        </authorList>
    </citation>
    <scope>NUCLEOTIDE SEQUENCE [LARGE SCALE GENOMIC DNA]</scope>
    <source>
        <strain>972 / ATCC 24843</strain>
    </source>
</reference>
<reference key="2">
    <citation type="journal article" date="2003" name="Mol. Biol. Cell">
        <title>Global transcriptional responses of fission yeast to environmental stress.</title>
        <authorList>
            <person name="Chen D."/>
            <person name="Toone W.M."/>
            <person name="Mata J."/>
            <person name="Lyne R."/>
            <person name="Burns G."/>
            <person name="Kivinen K."/>
            <person name="Brazma A."/>
            <person name="Jones N."/>
            <person name="Baehler J."/>
        </authorList>
    </citation>
    <scope>INDUCTION</scope>
</reference>
<reference key="3">
    <citation type="journal article" date="2006" name="Nat. Biotechnol.">
        <title>ORFeome cloning and global analysis of protein localization in the fission yeast Schizosaccharomyces pombe.</title>
        <authorList>
            <person name="Matsuyama A."/>
            <person name="Arai R."/>
            <person name="Yashiroda Y."/>
            <person name="Shirai A."/>
            <person name="Kamata A."/>
            <person name="Sekido S."/>
            <person name="Kobayashi Y."/>
            <person name="Hashimoto A."/>
            <person name="Hamamoto M."/>
            <person name="Hiraoka Y."/>
            <person name="Horinouchi S."/>
            <person name="Yoshida M."/>
        </authorList>
    </citation>
    <scope>SUBCELLULAR LOCATION [LARGE SCALE ANALYSIS]</scope>
</reference>
<gene>
    <name type="ORF">SPAC17A5.10</name>
</gene>
<protein>
    <recommendedName>
        <fullName>Proline/serine-rich protein C17A5.10</fullName>
    </recommendedName>
</protein>